<accession>B1KT52</accession>
<name>EX7S_CLOBM</name>
<protein>
    <recommendedName>
        <fullName evidence="1">Exodeoxyribonuclease 7 small subunit</fullName>
        <ecNumber evidence="1">3.1.11.6</ecNumber>
    </recommendedName>
    <alternativeName>
        <fullName evidence="1">Exodeoxyribonuclease VII small subunit</fullName>
        <shortName evidence="1">Exonuclease VII small subunit</shortName>
    </alternativeName>
</protein>
<evidence type="ECO:0000255" key="1">
    <source>
        <dbReference type="HAMAP-Rule" id="MF_00337"/>
    </source>
</evidence>
<keyword id="KW-0963">Cytoplasm</keyword>
<keyword id="KW-0269">Exonuclease</keyword>
<keyword id="KW-0378">Hydrolase</keyword>
<keyword id="KW-0540">Nuclease</keyword>
<reference key="1">
    <citation type="journal article" date="2007" name="PLoS ONE">
        <title>Analysis of the neurotoxin complex genes in Clostridium botulinum A1-A4 and B1 strains: BoNT/A3, /Ba4 and /B1 clusters are located within plasmids.</title>
        <authorList>
            <person name="Smith T.J."/>
            <person name="Hill K.K."/>
            <person name="Foley B.T."/>
            <person name="Detter J.C."/>
            <person name="Munk A.C."/>
            <person name="Bruce D.C."/>
            <person name="Doggett N.A."/>
            <person name="Smith L.A."/>
            <person name="Marks J.D."/>
            <person name="Xie G."/>
            <person name="Brettin T.S."/>
        </authorList>
    </citation>
    <scope>NUCLEOTIDE SEQUENCE [LARGE SCALE GENOMIC DNA]</scope>
    <source>
        <strain>Loch Maree / Type A3</strain>
    </source>
</reference>
<organism>
    <name type="scientific">Clostridium botulinum (strain Loch Maree / Type A3)</name>
    <dbReference type="NCBI Taxonomy" id="498214"/>
    <lineage>
        <taxon>Bacteria</taxon>
        <taxon>Bacillati</taxon>
        <taxon>Bacillota</taxon>
        <taxon>Clostridia</taxon>
        <taxon>Eubacteriales</taxon>
        <taxon>Clostridiaceae</taxon>
        <taxon>Clostridium</taxon>
    </lineage>
</organism>
<comment type="function">
    <text evidence="1">Bidirectionally degrades single-stranded DNA into large acid-insoluble oligonucleotides, which are then degraded further into small acid-soluble oligonucleotides.</text>
</comment>
<comment type="catalytic activity">
    <reaction evidence="1">
        <text>Exonucleolytic cleavage in either 5'- to 3'- or 3'- to 5'-direction to yield nucleoside 5'-phosphates.</text>
        <dbReference type="EC" id="3.1.11.6"/>
    </reaction>
</comment>
<comment type="subunit">
    <text evidence="1">Heterooligomer composed of large and small subunits.</text>
</comment>
<comment type="subcellular location">
    <subcellularLocation>
        <location evidence="1">Cytoplasm</location>
    </subcellularLocation>
</comment>
<comment type="similarity">
    <text evidence="1">Belongs to the XseB family.</text>
</comment>
<feature type="chain" id="PRO_1000119916" description="Exodeoxyribonuclease 7 small subunit">
    <location>
        <begin position="1"/>
        <end position="71"/>
    </location>
</feature>
<gene>
    <name evidence="1" type="primary">xseB</name>
    <name type="ordered locus">CLK_1274</name>
</gene>
<proteinExistence type="inferred from homology"/>
<sequence length="71" mass="8264">MGRKKESFENMLEKLETIVNSMDNGEITLEDSMKSYEEGIKLCNKLYKVLKDAEGKIKILEDNKEEDFENS</sequence>
<dbReference type="EC" id="3.1.11.6" evidence="1"/>
<dbReference type="EMBL" id="CP000962">
    <property type="protein sequence ID" value="ACA54130.1"/>
    <property type="molecule type" value="Genomic_DNA"/>
</dbReference>
<dbReference type="RefSeq" id="WP_012342273.1">
    <property type="nucleotide sequence ID" value="NC_010520.1"/>
</dbReference>
<dbReference type="SMR" id="B1KT52"/>
<dbReference type="KEGG" id="cbl:CLK_1274"/>
<dbReference type="HOGENOM" id="CLU_145918_3_2_9"/>
<dbReference type="GO" id="GO:0005829">
    <property type="term" value="C:cytosol"/>
    <property type="evidence" value="ECO:0007669"/>
    <property type="project" value="TreeGrafter"/>
</dbReference>
<dbReference type="GO" id="GO:0009318">
    <property type="term" value="C:exodeoxyribonuclease VII complex"/>
    <property type="evidence" value="ECO:0007669"/>
    <property type="project" value="InterPro"/>
</dbReference>
<dbReference type="GO" id="GO:0008855">
    <property type="term" value="F:exodeoxyribonuclease VII activity"/>
    <property type="evidence" value="ECO:0007669"/>
    <property type="project" value="UniProtKB-UniRule"/>
</dbReference>
<dbReference type="GO" id="GO:0006308">
    <property type="term" value="P:DNA catabolic process"/>
    <property type="evidence" value="ECO:0007669"/>
    <property type="project" value="UniProtKB-UniRule"/>
</dbReference>
<dbReference type="FunFam" id="1.10.287.1040:FF:000010">
    <property type="entry name" value="Exodeoxyribonuclease 7 small subunit"/>
    <property type="match status" value="1"/>
</dbReference>
<dbReference type="Gene3D" id="1.10.287.1040">
    <property type="entry name" value="Exonuclease VII, small subunit"/>
    <property type="match status" value="1"/>
</dbReference>
<dbReference type="HAMAP" id="MF_00337">
    <property type="entry name" value="Exonuc_7_S"/>
    <property type="match status" value="1"/>
</dbReference>
<dbReference type="InterPro" id="IPR003761">
    <property type="entry name" value="Exonuc_VII_S"/>
</dbReference>
<dbReference type="InterPro" id="IPR037004">
    <property type="entry name" value="Exonuc_VII_ssu_sf"/>
</dbReference>
<dbReference type="NCBIfam" id="NF002140">
    <property type="entry name" value="PRK00977.1-4"/>
    <property type="match status" value="1"/>
</dbReference>
<dbReference type="NCBIfam" id="TIGR01280">
    <property type="entry name" value="xseB"/>
    <property type="match status" value="1"/>
</dbReference>
<dbReference type="PANTHER" id="PTHR34137">
    <property type="entry name" value="EXODEOXYRIBONUCLEASE 7 SMALL SUBUNIT"/>
    <property type="match status" value="1"/>
</dbReference>
<dbReference type="PANTHER" id="PTHR34137:SF1">
    <property type="entry name" value="EXODEOXYRIBONUCLEASE 7 SMALL SUBUNIT"/>
    <property type="match status" value="1"/>
</dbReference>
<dbReference type="Pfam" id="PF02609">
    <property type="entry name" value="Exonuc_VII_S"/>
    <property type="match status" value="1"/>
</dbReference>
<dbReference type="PIRSF" id="PIRSF006488">
    <property type="entry name" value="Exonuc_VII_S"/>
    <property type="match status" value="1"/>
</dbReference>
<dbReference type="SUPFAM" id="SSF116842">
    <property type="entry name" value="XseB-like"/>
    <property type="match status" value="1"/>
</dbReference>